<proteinExistence type="inferred from homology"/>
<keyword id="KW-0460">Magnesium</keyword>
<keyword id="KW-0479">Metal-binding</keyword>
<keyword id="KW-0784">Thiamine biosynthesis</keyword>
<keyword id="KW-0808">Transferase</keyword>
<feature type="chain" id="PRO_1000008149" description="Thiamine-phosphate synthase">
    <location>
        <begin position="1"/>
        <end position="220"/>
    </location>
</feature>
<feature type="binding site" evidence="1">
    <location>
        <begin position="46"/>
        <end position="50"/>
    </location>
    <ligand>
        <name>4-amino-2-methyl-5-(diphosphooxymethyl)pyrimidine</name>
        <dbReference type="ChEBI" id="CHEBI:57841"/>
    </ligand>
</feature>
<feature type="binding site" evidence="1">
    <location>
        <position position="83"/>
    </location>
    <ligand>
        <name>4-amino-2-methyl-5-(diphosphooxymethyl)pyrimidine</name>
        <dbReference type="ChEBI" id="CHEBI:57841"/>
    </ligand>
</feature>
<feature type="binding site" evidence="1">
    <location>
        <position position="84"/>
    </location>
    <ligand>
        <name>Mg(2+)</name>
        <dbReference type="ChEBI" id="CHEBI:18420"/>
    </ligand>
</feature>
<feature type="binding site" evidence="1">
    <location>
        <position position="103"/>
    </location>
    <ligand>
        <name>Mg(2+)</name>
        <dbReference type="ChEBI" id="CHEBI:18420"/>
    </ligand>
</feature>
<feature type="binding site" evidence="1">
    <location>
        <position position="122"/>
    </location>
    <ligand>
        <name>4-amino-2-methyl-5-(diphosphooxymethyl)pyrimidine</name>
        <dbReference type="ChEBI" id="CHEBI:57841"/>
    </ligand>
</feature>
<feature type="binding site" evidence="1">
    <location>
        <begin position="149"/>
        <end position="151"/>
    </location>
    <ligand>
        <name>2-[(2R,5Z)-2-carboxy-4-methylthiazol-5(2H)-ylidene]ethyl phosphate</name>
        <dbReference type="ChEBI" id="CHEBI:62899"/>
    </ligand>
</feature>
<feature type="binding site" evidence="1">
    <location>
        <position position="152"/>
    </location>
    <ligand>
        <name>4-amino-2-methyl-5-(diphosphooxymethyl)pyrimidine</name>
        <dbReference type="ChEBI" id="CHEBI:57841"/>
    </ligand>
</feature>
<feature type="binding site" evidence="1">
    <location>
        <position position="181"/>
    </location>
    <ligand>
        <name>2-[(2R,5Z)-2-carboxy-4-methylthiazol-5(2H)-ylidene]ethyl phosphate</name>
        <dbReference type="ChEBI" id="CHEBI:62899"/>
    </ligand>
</feature>
<feature type="binding site" evidence="1">
    <location>
        <begin position="201"/>
        <end position="202"/>
    </location>
    <ligand>
        <name>2-[(2R,5Z)-2-carboxy-4-methylthiazol-5(2H)-ylidene]ethyl phosphate</name>
        <dbReference type="ChEBI" id="CHEBI:62899"/>
    </ligand>
</feature>
<evidence type="ECO:0000255" key="1">
    <source>
        <dbReference type="HAMAP-Rule" id="MF_00097"/>
    </source>
</evidence>
<protein>
    <recommendedName>
        <fullName evidence="1">Thiamine-phosphate synthase</fullName>
        <shortName evidence="1">TP synthase</shortName>
        <shortName evidence="1">TPS</shortName>
        <ecNumber evidence="1">2.5.1.3</ecNumber>
    </recommendedName>
    <alternativeName>
        <fullName evidence="1">Thiamine-phosphate pyrophosphorylase</fullName>
        <shortName evidence="1">TMP pyrophosphorylase</shortName>
        <shortName evidence="1">TMP-PPase</shortName>
    </alternativeName>
</protein>
<dbReference type="EC" id="2.5.1.3" evidence="1"/>
<dbReference type="EMBL" id="AE016827">
    <property type="protein sequence ID" value="AAU37283.1"/>
    <property type="molecule type" value="Genomic_DNA"/>
</dbReference>
<dbReference type="RefSeq" id="WP_011199855.1">
    <property type="nucleotide sequence ID" value="NC_006300.1"/>
</dbReference>
<dbReference type="SMR" id="Q65US7"/>
<dbReference type="STRING" id="221988.MS0676"/>
<dbReference type="KEGG" id="msu:MS0676"/>
<dbReference type="eggNOG" id="COG0352">
    <property type="taxonomic scope" value="Bacteria"/>
</dbReference>
<dbReference type="HOGENOM" id="CLU_018272_3_2_6"/>
<dbReference type="OrthoDB" id="9810880at2"/>
<dbReference type="UniPathway" id="UPA00060">
    <property type="reaction ID" value="UER00141"/>
</dbReference>
<dbReference type="Proteomes" id="UP000000607">
    <property type="component" value="Chromosome"/>
</dbReference>
<dbReference type="GO" id="GO:0005737">
    <property type="term" value="C:cytoplasm"/>
    <property type="evidence" value="ECO:0007669"/>
    <property type="project" value="TreeGrafter"/>
</dbReference>
<dbReference type="GO" id="GO:0000287">
    <property type="term" value="F:magnesium ion binding"/>
    <property type="evidence" value="ECO:0007669"/>
    <property type="project" value="UniProtKB-UniRule"/>
</dbReference>
<dbReference type="GO" id="GO:0004789">
    <property type="term" value="F:thiamine-phosphate diphosphorylase activity"/>
    <property type="evidence" value="ECO:0007669"/>
    <property type="project" value="UniProtKB-UniRule"/>
</dbReference>
<dbReference type="GO" id="GO:0009228">
    <property type="term" value="P:thiamine biosynthetic process"/>
    <property type="evidence" value="ECO:0007669"/>
    <property type="project" value="UniProtKB-KW"/>
</dbReference>
<dbReference type="GO" id="GO:0009229">
    <property type="term" value="P:thiamine diphosphate biosynthetic process"/>
    <property type="evidence" value="ECO:0007669"/>
    <property type="project" value="UniProtKB-UniRule"/>
</dbReference>
<dbReference type="CDD" id="cd00564">
    <property type="entry name" value="TMP_TenI"/>
    <property type="match status" value="1"/>
</dbReference>
<dbReference type="FunFam" id="3.20.20.70:FF:000096">
    <property type="entry name" value="Thiamine-phosphate synthase"/>
    <property type="match status" value="1"/>
</dbReference>
<dbReference type="Gene3D" id="3.20.20.70">
    <property type="entry name" value="Aldolase class I"/>
    <property type="match status" value="1"/>
</dbReference>
<dbReference type="HAMAP" id="MF_00097">
    <property type="entry name" value="TMP_synthase"/>
    <property type="match status" value="1"/>
</dbReference>
<dbReference type="InterPro" id="IPR013785">
    <property type="entry name" value="Aldolase_TIM"/>
</dbReference>
<dbReference type="InterPro" id="IPR036206">
    <property type="entry name" value="ThiamineP_synth_sf"/>
</dbReference>
<dbReference type="InterPro" id="IPR022998">
    <property type="entry name" value="ThiamineP_synth_TenI"/>
</dbReference>
<dbReference type="InterPro" id="IPR034291">
    <property type="entry name" value="TMP_synthase"/>
</dbReference>
<dbReference type="NCBIfam" id="TIGR00693">
    <property type="entry name" value="thiE"/>
    <property type="match status" value="1"/>
</dbReference>
<dbReference type="PANTHER" id="PTHR20857">
    <property type="entry name" value="THIAMINE-PHOSPHATE PYROPHOSPHORYLASE"/>
    <property type="match status" value="1"/>
</dbReference>
<dbReference type="PANTHER" id="PTHR20857:SF15">
    <property type="entry name" value="THIAMINE-PHOSPHATE SYNTHASE"/>
    <property type="match status" value="1"/>
</dbReference>
<dbReference type="Pfam" id="PF02581">
    <property type="entry name" value="TMP-TENI"/>
    <property type="match status" value="1"/>
</dbReference>
<dbReference type="SUPFAM" id="SSF51391">
    <property type="entry name" value="Thiamin phosphate synthase"/>
    <property type="match status" value="1"/>
</dbReference>
<comment type="function">
    <text evidence="1">Condenses 4-methyl-5-(beta-hydroxyethyl)thiazole monophosphate (THZ-P) and 2-methyl-4-amino-5-hydroxymethyl pyrimidine pyrophosphate (HMP-PP) to form thiamine monophosphate (TMP).</text>
</comment>
<comment type="catalytic activity">
    <reaction evidence="1">
        <text>2-[(2R,5Z)-2-carboxy-4-methylthiazol-5(2H)-ylidene]ethyl phosphate + 4-amino-2-methyl-5-(diphosphooxymethyl)pyrimidine + 2 H(+) = thiamine phosphate + CO2 + diphosphate</text>
        <dbReference type="Rhea" id="RHEA:47844"/>
        <dbReference type="ChEBI" id="CHEBI:15378"/>
        <dbReference type="ChEBI" id="CHEBI:16526"/>
        <dbReference type="ChEBI" id="CHEBI:33019"/>
        <dbReference type="ChEBI" id="CHEBI:37575"/>
        <dbReference type="ChEBI" id="CHEBI:57841"/>
        <dbReference type="ChEBI" id="CHEBI:62899"/>
        <dbReference type="EC" id="2.5.1.3"/>
    </reaction>
</comment>
<comment type="catalytic activity">
    <reaction evidence="1">
        <text>2-(2-carboxy-4-methylthiazol-5-yl)ethyl phosphate + 4-amino-2-methyl-5-(diphosphooxymethyl)pyrimidine + 2 H(+) = thiamine phosphate + CO2 + diphosphate</text>
        <dbReference type="Rhea" id="RHEA:47848"/>
        <dbReference type="ChEBI" id="CHEBI:15378"/>
        <dbReference type="ChEBI" id="CHEBI:16526"/>
        <dbReference type="ChEBI" id="CHEBI:33019"/>
        <dbReference type="ChEBI" id="CHEBI:37575"/>
        <dbReference type="ChEBI" id="CHEBI:57841"/>
        <dbReference type="ChEBI" id="CHEBI:62890"/>
        <dbReference type="EC" id="2.5.1.3"/>
    </reaction>
</comment>
<comment type="catalytic activity">
    <reaction evidence="1">
        <text>4-methyl-5-(2-phosphooxyethyl)-thiazole + 4-amino-2-methyl-5-(diphosphooxymethyl)pyrimidine + H(+) = thiamine phosphate + diphosphate</text>
        <dbReference type="Rhea" id="RHEA:22328"/>
        <dbReference type="ChEBI" id="CHEBI:15378"/>
        <dbReference type="ChEBI" id="CHEBI:33019"/>
        <dbReference type="ChEBI" id="CHEBI:37575"/>
        <dbReference type="ChEBI" id="CHEBI:57841"/>
        <dbReference type="ChEBI" id="CHEBI:58296"/>
        <dbReference type="EC" id="2.5.1.3"/>
    </reaction>
</comment>
<comment type="cofactor">
    <cofactor evidence="1">
        <name>Mg(2+)</name>
        <dbReference type="ChEBI" id="CHEBI:18420"/>
    </cofactor>
    <text evidence="1">Binds 1 Mg(2+) ion per subunit.</text>
</comment>
<comment type="pathway">
    <text evidence="1">Cofactor biosynthesis; thiamine diphosphate biosynthesis; thiamine phosphate from 4-amino-2-methyl-5-diphosphomethylpyrimidine and 4-methyl-5-(2-phosphoethyl)-thiazole: step 1/1.</text>
</comment>
<comment type="similarity">
    <text evidence="1">Belongs to the thiamine-phosphate synthase family.</text>
</comment>
<reference key="1">
    <citation type="journal article" date="2004" name="Nat. Biotechnol.">
        <title>The genome sequence of the capnophilic rumen bacterium Mannheimia succiniciproducens.</title>
        <authorList>
            <person name="Hong S.H."/>
            <person name="Kim J.S."/>
            <person name="Lee S.Y."/>
            <person name="In Y.H."/>
            <person name="Choi S.S."/>
            <person name="Rih J.-K."/>
            <person name="Kim C.H."/>
            <person name="Jeong H."/>
            <person name="Hur C.G."/>
            <person name="Kim J.J."/>
        </authorList>
    </citation>
    <scope>NUCLEOTIDE SEQUENCE [LARGE SCALE GENOMIC DNA]</scope>
    <source>
        <strain>KCTC 0769BP / MBEL55E</strain>
    </source>
</reference>
<name>THIE_MANSM</name>
<organism>
    <name type="scientific">Mannheimia succiniciproducens (strain KCTC 0769BP / MBEL55E)</name>
    <dbReference type="NCBI Taxonomy" id="221988"/>
    <lineage>
        <taxon>Bacteria</taxon>
        <taxon>Pseudomonadati</taxon>
        <taxon>Pseudomonadota</taxon>
        <taxon>Gammaproteobacteria</taxon>
        <taxon>Pasteurellales</taxon>
        <taxon>Pasteurellaceae</taxon>
        <taxon>Basfia</taxon>
    </lineage>
</organism>
<accession>Q65US7</accession>
<sequence>MNKIKSMLSVYFIAGSQDCRHLPGEPTENLLTILQRALEAGITCFQFREKGEQSLACDLQLKRRLALKCLQLCRQFQVPFIVNDDVELALSIQADGIHVGQKDTAVETILRNTRNKPIIGLSINTLAQALANKDRQDIDYFGVGPIFPTNSKADHSPLVGMNFIRQIRQLGIDKPCVAIGGIKEESAAILRRLGADGVAVISAISHSVNIANTVKTLAQK</sequence>
<gene>
    <name evidence="1" type="primary">thiE</name>
    <name type="ordered locus">MS0676</name>
</gene>